<organism>
    <name type="scientific">Methanocaldococcus jannaschii (strain ATCC 43067 / DSM 2661 / JAL-1 / JCM 10045 / NBRC 100440)</name>
    <name type="common">Methanococcus jannaschii</name>
    <dbReference type="NCBI Taxonomy" id="243232"/>
    <lineage>
        <taxon>Archaea</taxon>
        <taxon>Methanobacteriati</taxon>
        <taxon>Methanobacteriota</taxon>
        <taxon>Methanomada group</taxon>
        <taxon>Methanococci</taxon>
        <taxon>Methanococcales</taxon>
        <taxon>Methanocaldococcaceae</taxon>
        <taxon>Methanocaldococcus</taxon>
    </lineage>
</organism>
<gene>
    <name evidence="1" type="primary">rpl3</name>
    <name type="ordered locus">MJ0176</name>
</gene>
<feature type="chain" id="PRO_0000077210" description="Large ribosomal subunit protein uL3">
    <location>
        <begin position="1"/>
        <end position="335"/>
    </location>
</feature>
<sequence>MGLNINRPRRGSLAFSPRKRAKRPVPRIRSWPEEDTVRLQAFPVYKAGMSHAFIKEDNPKSPNAGQEVFTPITILEAPPINVCAIRVYGRNERNYLTTLTEVWADNLDKELERKIKLPKKEDRKTVEDLEALKDKIEDVRVLVHTNPKLTCLPKKKPEILEIRIGGKDIEERLNYAKEILGKQLNITDVFQEGELVDTIGVTKGKGFQGQVKRWGVKIQFGKHARKGVGRHVGSIGPWQPKMVMWSVPMPGQMGYHQRTEYNKRILKIGNNGDEITPKGGFLHYGVIRNNYVVLKGSVQGPAKRLIVLRRAIRPQEPLIKVPEITYISTTSKQGK</sequence>
<reference key="1">
    <citation type="journal article" date="1996" name="Science">
        <title>Complete genome sequence of the methanogenic archaeon, Methanococcus jannaschii.</title>
        <authorList>
            <person name="Bult C.J."/>
            <person name="White O."/>
            <person name="Olsen G.J."/>
            <person name="Zhou L."/>
            <person name="Fleischmann R.D."/>
            <person name="Sutton G.G."/>
            <person name="Blake J.A."/>
            <person name="FitzGerald L.M."/>
            <person name="Clayton R.A."/>
            <person name="Gocayne J.D."/>
            <person name="Kerlavage A.R."/>
            <person name="Dougherty B.A."/>
            <person name="Tomb J.-F."/>
            <person name="Adams M.D."/>
            <person name="Reich C.I."/>
            <person name="Overbeek R."/>
            <person name="Kirkness E.F."/>
            <person name="Weinstock K.G."/>
            <person name="Merrick J.M."/>
            <person name="Glodek A."/>
            <person name="Scott J.L."/>
            <person name="Geoghagen N.S.M."/>
            <person name="Weidman J.F."/>
            <person name="Fuhrmann J.L."/>
            <person name="Nguyen D."/>
            <person name="Utterback T.R."/>
            <person name="Kelley J.M."/>
            <person name="Peterson J.D."/>
            <person name="Sadow P.W."/>
            <person name="Hanna M.C."/>
            <person name="Cotton M.D."/>
            <person name="Roberts K.M."/>
            <person name="Hurst M.A."/>
            <person name="Kaine B.P."/>
            <person name="Borodovsky M."/>
            <person name="Klenk H.-P."/>
            <person name="Fraser C.M."/>
            <person name="Smith H.O."/>
            <person name="Woese C.R."/>
            <person name="Venter J.C."/>
        </authorList>
    </citation>
    <scope>NUCLEOTIDE SEQUENCE [LARGE SCALE GENOMIC DNA]</scope>
    <source>
        <strain>ATCC 43067 / DSM 2661 / JAL-1 / JCM 10045 / NBRC 100440</strain>
    </source>
</reference>
<name>RL3_METJA</name>
<comment type="function">
    <text evidence="1">One of the primary rRNA binding proteins, it binds directly near the 3'-end of the 23S rRNA, where it nucleates assembly of the 50S subunit.</text>
</comment>
<comment type="subunit">
    <text evidence="1">Part of the 50S ribosomal subunit. Forms a cluster with proteins L14 and L24e.</text>
</comment>
<comment type="similarity">
    <text evidence="1">Belongs to the universal ribosomal protein uL3 family.</text>
</comment>
<keyword id="KW-1185">Reference proteome</keyword>
<keyword id="KW-0687">Ribonucleoprotein</keyword>
<keyword id="KW-0689">Ribosomal protein</keyword>
<keyword id="KW-0694">RNA-binding</keyword>
<keyword id="KW-0699">rRNA-binding</keyword>
<dbReference type="EMBL" id="L77117">
    <property type="protein sequence ID" value="AAB98161.1"/>
    <property type="molecule type" value="Genomic_DNA"/>
</dbReference>
<dbReference type="PIR" id="A64322">
    <property type="entry name" value="A64322"/>
</dbReference>
<dbReference type="RefSeq" id="WP_010869671.1">
    <property type="nucleotide sequence ID" value="NC_000909.1"/>
</dbReference>
<dbReference type="SMR" id="P54014"/>
<dbReference type="FunCoup" id="P54014">
    <property type="interactions" value="135"/>
</dbReference>
<dbReference type="STRING" id="243232.MJ_0176"/>
<dbReference type="PaxDb" id="243232-MJ_0176"/>
<dbReference type="EnsemblBacteria" id="AAB98161">
    <property type="protein sequence ID" value="AAB98161"/>
    <property type="gene ID" value="MJ_0176"/>
</dbReference>
<dbReference type="GeneID" id="1451023"/>
<dbReference type="KEGG" id="mja:MJ_0176"/>
<dbReference type="eggNOG" id="arCOG04070">
    <property type="taxonomic scope" value="Archaea"/>
</dbReference>
<dbReference type="HOGENOM" id="CLU_033361_2_0_2"/>
<dbReference type="InParanoid" id="P54014"/>
<dbReference type="OrthoDB" id="6121at2157"/>
<dbReference type="PhylomeDB" id="P54014"/>
<dbReference type="Proteomes" id="UP000000805">
    <property type="component" value="Chromosome"/>
</dbReference>
<dbReference type="GO" id="GO:0022625">
    <property type="term" value="C:cytosolic large ribosomal subunit"/>
    <property type="evidence" value="ECO:0000318"/>
    <property type="project" value="GO_Central"/>
</dbReference>
<dbReference type="GO" id="GO:0003723">
    <property type="term" value="F:RNA binding"/>
    <property type="evidence" value="ECO:0000318"/>
    <property type="project" value="GO_Central"/>
</dbReference>
<dbReference type="GO" id="GO:0019843">
    <property type="term" value="F:rRNA binding"/>
    <property type="evidence" value="ECO:0007669"/>
    <property type="project" value="UniProtKB-UniRule"/>
</dbReference>
<dbReference type="GO" id="GO:0003735">
    <property type="term" value="F:structural constituent of ribosome"/>
    <property type="evidence" value="ECO:0000318"/>
    <property type="project" value="GO_Central"/>
</dbReference>
<dbReference type="GO" id="GO:0006412">
    <property type="term" value="P:translation"/>
    <property type="evidence" value="ECO:0000318"/>
    <property type="project" value="GO_Central"/>
</dbReference>
<dbReference type="FunFam" id="3.30.1430.10:FF:000005">
    <property type="entry name" value="50S ribosomal protein L3"/>
    <property type="match status" value="1"/>
</dbReference>
<dbReference type="Gene3D" id="3.30.1430.10">
    <property type="match status" value="1"/>
</dbReference>
<dbReference type="Gene3D" id="4.10.960.10">
    <property type="entry name" value="Ribosomal protein L3, domain 3"/>
    <property type="match status" value="1"/>
</dbReference>
<dbReference type="Gene3D" id="2.40.30.10">
    <property type="entry name" value="Translation factors"/>
    <property type="match status" value="1"/>
</dbReference>
<dbReference type="HAMAP" id="MF_01325_A">
    <property type="entry name" value="Ribosomal_uL3_A"/>
    <property type="match status" value="1"/>
</dbReference>
<dbReference type="InterPro" id="IPR045077">
    <property type="entry name" value="L3_arc_euk"/>
</dbReference>
<dbReference type="InterPro" id="IPR044892">
    <property type="entry name" value="Ribosomal_L3_dom_3_arc_sf"/>
</dbReference>
<dbReference type="InterPro" id="IPR000597">
    <property type="entry name" value="Ribosomal_uL3"/>
</dbReference>
<dbReference type="InterPro" id="IPR019928">
    <property type="entry name" value="Ribosomal_uL3_arc"/>
</dbReference>
<dbReference type="InterPro" id="IPR019926">
    <property type="entry name" value="Ribosomal_uL3_CS"/>
</dbReference>
<dbReference type="InterPro" id="IPR009000">
    <property type="entry name" value="Transl_B-barrel_sf"/>
</dbReference>
<dbReference type="NCBIfam" id="TIGR03626">
    <property type="entry name" value="L3_arch"/>
    <property type="match status" value="1"/>
</dbReference>
<dbReference type="NCBIfam" id="NF003261">
    <property type="entry name" value="PRK04231.1"/>
    <property type="match status" value="1"/>
</dbReference>
<dbReference type="PANTHER" id="PTHR11363">
    <property type="entry name" value="60S RIBOSOMAL PROTEIN L3-RELATED"/>
    <property type="match status" value="1"/>
</dbReference>
<dbReference type="PANTHER" id="PTHR11363:SF5">
    <property type="entry name" value="LARGE RIBOSOMAL SUBUNIT PROTEIN UL3"/>
    <property type="match status" value="1"/>
</dbReference>
<dbReference type="Pfam" id="PF00297">
    <property type="entry name" value="Ribosomal_L3"/>
    <property type="match status" value="1"/>
</dbReference>
<dbReference type="SUPFAM" id="SSF50447">
    <property type="entry name" value="Translation proteins"/>
    <property type="match status" value="1"/>
</dbReference>
<dbReference type="PROSITE" id="PS00474">
    <property type="entry name" value="RIBOSOMAL_L3"/>
    <property type="match status" value="1"/>
</dbReference>
<protein>
    <recommendedName>
        <fullName evidence="1">Large ribosomal subunit protein uL3</fullName>
    </recommendedName>
    <alternativeName>
        <fullName evidence="2">50S ribosomal protein L3</fullName>
    </alternativeName>
</protein>
<accession>P54014</accession>
<evidence type="ECO:0000255" key="1">
    <source>
        <dbReference type="HAMAP-Rule" id="MF_01325"/>
    </source>
</evidence>
<evidence type="ECO:0000305" key="2"/>
<proteinExistence type="inferred from homology"/>